<organism>
    <name type="scientific">Streptococcus thermophilus (strain CNRZ 1066)</name>
    <dbReference type="NCBI Taxonomy" id="299768"/>
    <lineage>
        <taxon>Bacteria</taxon>
        <taxon>Bacillati</taxon>
        <taxon>Bacillota</taxon>
        <taxon>Bacilli</taxon>
        <taxon>Lactobacillales</taxon>
        <taxon>Streptococcaceae</taxon>
        <taxon>Streptococcus</taxon>
    </lineage>
</organism>
<comment type="function">
    <text evidence="2">Cell wall formation.</text>
</comment>
<comment type="catalytic activity">
    <reaction evidence="2">
        <text>2 D-alanine + ATP = D-alanyl-D-alanine + ADP + phosphate + H(+)</text>
        <dbReference type="Rhea" id="RHEA:11224"/>
        <dbReference type="ChEBI" id="CHEBI:15378"/>
        <dbReference type="ChEBI" id="CHEBI:30616"/>
        <dbReference type="ChEBI" id="CHEBI:43474"/>
        <dbReference type="ChEBI" id="CHEBI:57416"/>
        <dbReference type="ChEBI" id="CHEBI:57822"/>
        <dbReference type="ChEBI" id="CHEBI:456216"/>
        <dbReference type="EC" id="6.3.2.4"/>
    </reaction>
</comment>
<comment type="cofactor">
    <cofactor evidence="1">
        <name>Mg(2+)</name>
        <dbReference type="ChEBI" id="CHEBI:18420"/>
    </cofactor>
    <cofactor evidence="1">
        <name>Mn(2+)</name>
        <dbReference type="ChEBI" id="CHEBI:29035"/>
    </cofactor>
    <text evidence="1">Binds 2 magnesium or manganese ions per subunit.</text>
</comment>
<comment type="pathway">
    <text evidence="2">Cell wall biogenesis; peptidoglycan biosynthesis.</text>
</comment>
<comment type="subcellular location">
    <subcellularLocation>
        <location evidence="2">Cytoplasm</location>
    </subcellularLocation>
</comment>
<comment type="similarity">
    <text evidence="2">Belongs to the D-alanine--D-alanine ligase family.</text>
</comment>
<proteinExistence type="inferred from homology"/>
<reference key="1">
    <citation type="journal article" date="2004" name="Nat. Biotechnol.">
        <title>Complete sequence and comparative genome analysis of the dairy bacterium Streptococcus thermophilus.</title>
        <authorList>
            <person name="Bolotin A."/>
            <person name="Quinquis B."/>
            <person name="Renault P."/>
            <person name="Sorokin A."/>
            <person name="Ehrlich S.D."/>
            <person name="Kulakauskas S."/>
            <person name="Lapidus A."/>
            <person name="Goltsman E."/>
            <person name="Mazur M."/>
            <person name="Pusch G.D."/>
            <person name="Fonstein M."/>
            <person name="Overbeek R."/>
            <person name="Kyprides N."/>
            <person name="Purnelle B."/>
            <person name="Prozzi D."/>
            <person name="Ngui K."/>
            <person name="Masuy D."/>
            <person name="Hancy F."/>
            <person name="Burteau S."/>
            <person name="Boutry M."/>
            <person name="Delcour J."/>
            <person name="Goffeau A."/>
            <person name="Hols P."/>
        </authorList>
    </citation>
    <scope>NUCLEOTIDE SEQUENCE [LARGE SCALE GENOMIC DNA]</scope>
    <source>
        <strain>CNRZ 1066</strain>
    </source>
</reference>
<evidence type="ECO:0000250" key="1"/>
<evidence type="ECO:0000255" key="2">
    <source>
        <dbReference type="HAMAP-Rule" id="MF_00047"/>
    </source>
</evidence>
<accession>Q5LYJ2</accession>
<name>DDL_STRT1</name>
<sequence>MSKQTLILLYGGRSAEREVSVLSAESVMRAVDYNAFEVKTYFITQSGDFIKTQEFIETPGDDEKLMTNDTVEASQAIKPSDIYEEDAVVFPVLHGPMGEDGSIQGFLETLKLPYVGTNVLSSSVAMDKIMTKRILEVAGVPQVAYTVYIEGEDLEAAVAETLEKLTFPVFVKPANMGSSVGISKAENESELRSAIDLALKYDSRILIEQGVVAREIEVGILGNTTVKTTDPGEVVKDVAFYDYQAKYIDNKITMDIPARVPVEVMTQMRAYAAKAFRALGGCGLARCDFFLTEDGAIYLNELNTMPGFTQWSMYPLLWENMGLSYSDIIKELVVLGQEMFDKRESHLI</sequence>
<gene>
    <name evidence="2" type="primary">ddl</name>
    <name type="ordered locus">str1583</name>
</gene>
<protein>
    <recommendedName>
        <fullName evidence="2">D-alanine--D-alanine ligase</fullName>
        <ecNumber evidence="2">6.3.2.4</ecNumber>
    </recommendedName>
    <alternativeName>
        <fullName evidence="2">D-Ala-D-Ala ligase</fullName>
    </alternativeName>
    <alternativeName>
        <fullName evidence="2">D-alanylalanine synthetase</fullName>
    </alternativeName>
</protein>
<feature type="chain" id="PRO_1000030506" description="D-alanine--D-alanine ligase">
    <location>
        <begin position="1"/>
        <end position="348"/>
    </location>
</feature>
<feature type="domain" description="ATP-grasp" evidence="2">
    <location>
        <begin position="132"/>
        <end position="334"/>
    </location>
</feature>
<feature type="binding site" evidence="2">
    <location>
        <begin position="162"/>
        <end position="217"/>
    </location>
    <ligand>
        <name>ATP</name>
        <dbReference type="ChEBI" id="CHEBI:30616"/>
    </ligand>
</feature>
<feature type="binding site" evidence="2">
    <location>
        <position position="288"/>
    </location>
    <ligand>
        <name>Mg(2+)</name>
        <dbReference type="ChEBI" id="CHEBI:18420"/>
        <label>1</label>
    </ligand>
</feature>
<feature type="binding site" evidence="2">
    <location>
        <position position="301"/>
    </location>
    <ligand>
        <name>Mg(2+)</name>
        <dbReference type="ChEBI" id="CHEBI:18420"/>
        <label>1</label>
    </ligand>
</feature>
<feature type="binding site" evidence="2">
    <location>
        <position position="301"/>
    </location>
    <ligand>
        <name>Mg(2+)</name>
        <dbReference type="ChEBI" id="CHEBI:18420"/>
        <label>2</label>
    </ligand>
</feature>
<feature type="binding site" evidence="2">
    <location>
        <position position="303"/>
    </location>
    <ligand>
        <name>Mg(2+)</name>
        <dbReference type="ChEBI" id="CHEBI:18420"/>
        <label>2</label>
    </ligand>
</feature>
<dbReference type="EC" id="6.3.2.4" evidence="2"/>
<dbReference type="EMBL" id="CP000024">
    <property type="protein sequence ID" value="AAV63113.1"/>
    <property type="molecule type" value="Genomic_DNA"/>
</dbReference>
<dbReference type="RefSeq" id="WP_011227474.1">
    <property type="nucleotide sequence ID" value="NC_006449.1"/>
</dbReference>
<dbReference type="SMR" id="Q5LYJ2"/>
<dbReference type="KEGG" id="stc:str1583"/>
<dbReference type="HOGENOM" id="CLU_039268_0_0_9"/>
<dbReference type="UniPathway" id="UPA00219"/>
<dbReference type="GO" id="GO:0005829">
    <property type="term" value="C:cytosol"/>
    <property type="evidence" value="ECO:0007669"/>
    <property type="project" value="TreeGrafter"/>
</dbReference>
<dbReference type="GO" id="GO:0005524">
    <property type="term" value="F:ATP binding"/>
    <property type="evidence" value="ECO:0007669"/>
    <property type="project" value="UniProtKB-KW"/>
</dbReference>
<dbReference type="GO" id="GO:0008716">
    <property type="term" value="F:D-alanine-D-alanine ligase activity"/>
    <property type="evidence" value="ECO:0007669"/>
    <property type="project" value="UniProtKB-UniRule"/>
</dbReference>
<dbReference type="GO" id="GO:0046872">
    <property type="term" value="F:metal ion binding"/>
    <property type="evidence" value="ECO:0007669"/>
    <property type="project" value="UniProtKB-KW"/>
</dbReference>
<dbReference type="GO" id="GO:0071555">
    <property type="term" value="P:cell wall organization"/>
    <property type="evidence" value="ECO:0007669"/>
    <property type="project" value="UniProtKB-KW"/>
</dbReference>
<dbReference type="GO" id="GO:0009252">
    <property type="term" value="P:peptidoglycan biosynthetic process"/>
    <property type="evidence" value="ECO:0007669"/>
    <property type="project" value="UniProtKB-UniRule"/>
</dbReference>
<dbReference type="GO" id="GO:0008360">
    <property type="term" value="P:regulation of cell shape"/>
    <property type="evidence" value="ECO:0007669"/>
    <property type="project" value="UniProtKB-KW"/>
</dbReference>
<dbReference type="FunFam" id="3.30.1490.20:FF:000007">
    <property type="entry name" value="D-alanine--D-alanine ligase"/>
    <property type="match status" value="1"/>
</dbReference>
<dbReference type="FunFam" id="3.30.470.20:FF:000008">
    <property type="entry name" value="D-alanine--D-alanine ligase"/>
    <property type="match status" value="1"/>
</dbReference>
<dbReference type="Gene3D" id="3.40.50.20">
    <property type="match status" value="1"/>
</dbReference>
<dbReference type="Gene3D" id="3.30.1490.20">
    <property type="entry name" value="ATP-grasp fold, A domain"/>
    <property type="match status" value="1"/>
</dbReference>
<dbReference type="Gene3D" id="3.30.470.20">
    <property type="entry name" value="ATP-grasp fold, B domain"/>
    <property type="match status" value="1"/>
</dbReference>
<dbReference type="HAMAP" id="MF_00047">
    <property type="entry name" value="Dala_Dala_lig"/>
    <property type="match status" value="1"/>
</dbReference>
<dbReference type="InterPro" id="IPR011761">
    <property type="entry name" value="ATP-grasp"/>
</dbReference>
<dbReference type="InterPro" id="IPR013815">
    <property type="entry name" value="ATP_grasp_subdomain_1"/>
</dbReference>
<dbReference type="InterPro" id="IPR000291">
    <property type="entry name" value="D-Ala_lig_Van_CS"/>
</dbReference>
<dbReference type="InterPro" id="IPR005905">
    <property type="entry name" value="D_ala_D_ala"/>
</dbReference>
<dbReference type="InterPro" id="IPR011095">
    <property type="entry name" value="Dala_Dala_lig_C"/>
</dbReference>
<dbReference type="InterPro" id="IPR011127">
    <property type="entry name" value="Dala_Dala_lig_N"/>
</dbReference>
<dbReference type="InterPro" id="IPR016185">
    <property type="entry name" value="PreATP-grasp_dom_sf"/>
</dbReference>
<dbReference type="NCBIfam" id="TIGR01205">
    <property type="entry name" value="D_ala_D_alaTIGR"/>
    <property type="match status" value="1"/>
</dbReference>
<dbReference type="NCBIfam" id="NF002528">
    <property type="entry name" value="PRK01966.1-4"/>
    <property type="match status" value="1"/>
</dbReference>
<dbReference type="NCBIfam" id="NF002529">
    <property type="entry name" value="PRK01966.1-5"/>
    <property type="match status" value="1"/>
</dbReference>
<dbReference type="PANTHER" id="PTHR23132">
    <property type="entry name" value="D-ALANINE--D-ALANINE LIGASE"/>
    <property type="match status" value="1"/>
</dbReference>
<dbReference type="PANTHER" id="PTHR23132:SF25">
    <property type="entry name" value="D-ALANINE--D-ALANINE LIGASE A"/>
    <property type="match status" value="1"/>
</dbReference>
<dbReference type="Pfam" id="PF07478">
    <property type="entry name" value="Dala_Dala_lig_C"/>
    <property type="match status" value="1"/>
</dbReference>
<dbReference type="Pfam" id="PF01820">
    <property type="entry name" value="Dala_Dala_lig_N"/>
    <property type="match status" value="1"/>
</dbReference>
<dbReference type="PIRSF" id="PIRSF039102">
    <property type="entry name" value="Ddl/VanB"/>
    <property type="match status" value="1"/>
</dbReference>
<dbReference type="SUPFAM" id="SSF56059">
    <property type="entry name" value="Glutathione synthetase ATP-binding domain-like"/>
    <property type="match status" value="1"/>
</dbReference>
<dbReference type="SUPFAM" id="SSF52440">
    <property type="entry name" value="PreATP-grasp domain"/>
    <property type="match status" value="1"/>
</dbReference>
<dbReference type="PROSITE" id="PS50975">
    <property type="entry name" value="ATP_GRASP"/>
    <property type="match status" value="1"/>
</dbReference>
<dbReference type="PROSITE" id="PS00843">
    <property type="entry name" value="DALA_DALA_LIGASE_1"/>
    <property type="match status" value="1"/>
</dbReference>
<dbReference type="PROSITE" id="PS00844">
    <property type="entry name" value="DALA_DALA_LIGASE_2"/>
    <property type="match status" value="1"/>
</dbReference>
<keyword id="KW-0067">ATP-binding</keyword>
<keyword id="KW-0133">Cell shape</keyword>
<keyword id="KW-0961">Cell wall biogenesis/degradation</keyword>
<keyword id="KW-0963">Cytoplasm</keyword>
<keyword id="KW-0436">Ligase</keyword>
<keyword id="KW-0460">Magnesium</keyword>
<keyword id="KW-0464">Manganese</keyword>
<keyword id="KW-0479">Metal-binding</keyword>
<keyword id="KW-0547">Nucleotide-binding</keyword>
<keyword id="KW-0573">Peptidoglycan synthesis</keyword>